<feature type="signal peptide" evidence="1">
    <location>
        <begin position="1"/>
        <end position="20"/>
    </location>
</feature>
<feature type="chain" id="PRO_0000018776" description="Beta-2-microglobulin">
    <location>
        <begin position="21"/>
        <end position="119"/>
    </location>
</feature>
<feature type="domain" description="Ig-like C1-type">
    <location>
        <begin position="25"/>
        <end position="114"/>
    </location>
</feature>
<feature type="disulfide bond" evidence="2">
    <location>
        <begin position="45"/>
        <end position="100"/>
    </location>
</feature>
<gene>
    <name type="primary">B2M</name>
</gene>
<keyword id="KW-1015">Disulfide bond</keyword>
<keyword id="KW-0391">Immunity</keyword>
<keyword id="KW-0393">Immunoglobulin domain</keyword>
<keyword id="KW-0490">MHC I</keyword>
<keyword id="KW-0964">Secreted</keyword>
<keyword id="KW-0732">Signal</keyword>
<evidence type="ECO:0000250" key="1"/>
<evidence type="ECO:0000255" key="2">
    <source>
        <dbReference type="PROSITE-ProRule" id="PRU00114"/>
    </source>
</evidence>
<evidence type="ECO:0000305" key="3"/>
<comment type="function">
    <text evidence="1">Component of the class I major histocompatibility complex (MHC). Involved in the presentation of peptide antigens to the immune system (By similarity).</text>
</comment>
<comment type="subunit">
    <text evidence="1">Heterodimer of an alpha chain and a beta chain. Beta-2-microglobulin is the beta-chain of major histocompatibility complex class I molecules (By similarity).</text>
</comment>
<comment type="subcellular location">
    <subcellularLocation>
        <location evidence="1">Secreted</location>
    </subcellularLocation>
</comment>
<comment type="similarity">
    <text evidence="3">Belongs to the beta-2-microglobulin family.</text>
</comment>
<sequence>MARSVAVVFLMLLSVVCLDAIQRPPQVQVYTRHPPEDGKTNFLNCYVSQFHPPQIEIELLKNGKKMDKVELSDLSFNKDWSFYLLAHTEFTPTATDKYACRVTHTTLKEPKVVTWERDM</sequence>
<accession>Q9WV24</accession>
<proteinExistence type="inferred from homology"/>
<organism>
    <name type="scientific">Cricetulus griseus</name>
    <name type="common">Chinese hamster</name>
    <name type="synonym">Cricetulus barabensis griseus</name>
    <dbReference type="NCBI Taxonomy" id="10029"/>
    <lineage>
        <taxon>Eukaryota</taxon>
        <taxon>Metazoa</taxon>
        <taxon>Chordata</taxon>
        <taxon>Craniata</taxon>
        <taxon>Vertebrata</taxon>
        <taxon>Euteleostomi</taxon>
        <taxon>Mammalia</taxon>
        <taxon>Eutheria</taxon>
        <taxon>Euarchontoglires</taxon>
        <taxon>Glires</taxon>
        <taxon>Rodentia</taxon>
        <taxon>Myomorpha</taxon>
        <taxon>Muroidea</taxon>
        <taxon>Cricetidae</taxon>
        <taxon>Cricetinae</taxon>
        <taxon>Cricetulus</taxon>
    </lineage>
</organism>
<name>B2MG_CRIGR</name>
<protein>
    <recommendedName>
        <fullName>Beta-2-microglobulin</fullName>
    </recommendedName>
</protein>
<dbReference type="EMBL" id="X57112">
    <property type="protein sequence ID" value="CAA40395.1"/>
    <property type="molecule type" value="mRNA"/>
</dbReference>
<dbReference type="RefSeq" id="NP_001233603.1">
    <property type="nucleotide sequence ID" value="NM_001246674.2"/>
</dbReference>
<dbReference type="SMR" id="Q9WV24"/>
<dbReference type="PaxDb" id="10029-NP_001233603.1"/>
<dbReference type="Ensembl" id="ENSCGRT00001022765.1">
    <property type="protein sequence ID" value="ENSCGRP00001018521.1"/>
    <property type="gene ID" value="ENSCGRG00001018239.1"/>
</dbReference>
<dbReference type="GeneID" id="100689409"/>
<dbReference type="KEGG" id="cge:100689409"/>
<dbReference type="CTD" id="567"/>
<dbReference type="eggNOG" id="ENOG502S8GM">
    <property type="taxonomic scope" value="Eukaryota"/>
</dbReference>
<dbReference type="GeneTree" id="ENSGT00690000102227"/>
<dbReference type="OMA" id="WCVVLVW"/>
<dbReference type="OrthoDB" id="9949628at2759"/>
<dbReference type="Proteomes" id="UP000694386">
    <property type="component" value="Unplaced"/>
</dbReference>
<dbReference type="Proteomes" id="UP001108280">
    <property type="component" value="Chromosome 6"/>
</dbReference>
<dbReference type="GO" id="GO:0005829">
    <property type="term" value="C:cytosol"/>
    <property type="evidence" value="ECO:0007669"/>
    <property type="project" value="Ensembl"/>
</dbReference>
<dbReference type="GO" id="GO:0009897">
    <property type="term" value="C:external side of plasma membrane"/>
    <property type="evidence" value="ECO:0007669"/>
    <property type="project" value="Ensembl"/>
</dbReference>
<dbReference type="GO" id="GO:0005576">
    <property type="term" value="C:extracellular region"/>
    <property type="evidence" value="ECO:0007669"/>
    <property type="project" value="UniProtKB-SubCell"/>
</dbReference>
<dbReference type="GO" id="GO:0005794">
    <property type="term" value="C:Golgi apparatus"/>
    <property type="evidence" value="ECO:0007669"/>
    <property type="project" value="Ensembl"/>
</dbReference>
<dbReference type="GO" id="GO:1990712">
    <property type="term" value="C:HFE-transferrin receptor complex"/>
    <property type="evidence" value="ECO:0007669"/>
    <property type="project" value="Ensembl"/>
</dbReference>
<dbReference type="GO" id="GO:0042824">
    <property type="term" value="C:MHC class I peptide loading complex"/>
    <property type="evidence" value="ECO:0007669"/>
    <property type="project" value="Ensembl"/>
</dbReference>
<dbReference type="GO" id="GO:0042612">
    <property type="term" value="C:MHC class I protein complex"/>
    <property type="evidence" value="ECO:0007669"/>
    <property type="project" value="UniProtKB-KW"/>
</dbReference>
<dbReference type="GO" id="GO:0042803">
    <property type="term" value="F:protein homodimerization activity"/>
    <property type="evidence" value="ECO:0007669"/>
    <property type="project" value="Ensembl"/>
</dbReference>
<dbReference type="GO" id="GO:0005198">
    <property type="term" value="F:structural molecule activity"/>
    <property type="evidence" value="ECO:0007669"/>
    <property type="project" value="Ensembl"/>
</dbReference>
<dbReference type="GO" id="GO:1990000">
    <property type="term" value="P:amyloid fibril formation"/>
    <property type="evidence" value="ECO:0007669"/>
    <property type="project" value="Ensembl"/>
</dbReference>
<dbReference type="GO" id="GO:0019885">
    <property type="term" value="P:antigen processing and presentation of endogenous peptide antigen via MHC class I"/>
    <property type="evidence" value="ECO:0007669"/>
    <property type="project" value="Ensembl"/>
</dbReference>
<dbReference type="GO" id="GO:0002481">
    <property type="term" value="P:antigen processing and presentation of exogenous protein antigen via MHC class Ib, TAP-dependent"/>
    <property type="evidence" value="ECO:0007669"/>
    <property type="project" value="Ensembl"/>
</dbReference>
<dbReference type="GO" id="GO:0071283">
    <property type="term" value="P:cellular response to iron(III) ion"/>
    <property type="evidence" value="ECO:0007669"/>
    <property type="project" value="Ensembl"/>
</dbReference>
<dbReference type="GO" id="GO:0071316">
    <property type="term" value="P:cellular response to nicotine"/>
    <property type="evidence" value="ECO:0007669"/>
    <property type="project" value="Ensembl"/>
</dbReference>
<dbReference type="GO" id="GO:0006879">
    <property type="term" value="P:intracellular iron ion homeostasis"/>
    <property type="evidence" value="ECO:0007669"/>
    <property type="project" value="Ensembl"/>
</dbReference>
<dbReference type="GO" id="GO:0006826">
    <property type="term" value="P:iron ion transport"/>
    <property type="evidence" value="ECO:0007669"/>
    <property type="project" value="Ensembl"/>
</dbReference>
<dbReference type="GO" id="GO:0007611">
    <property type="term" value="P:learning or memory"/>
    <property type="evidence" value="ECO:0007669"/>
    <property type="project" value="Ensembl"/>
</dbReference>
<dbReference type="GO" id="GO:0060586">
    <property type="term" value="P:multicellular organismal-level iron ion homeostasis"/>
    <property type="evidence" value="ECO:0007669"/>
    <property type="project" value="Ensembl"/>
</dbReference>
<dbReference type="GO" id="GO:0050680">
    <property type="term" value="P:negative regulation of epithelial cell proliferation"/>
    <property type="evidence" value="ECO:0007669"/>
    <property type="project" value="Ensembl"/>
</dbReference>
<dbReference type="GO" id="GO:2000978">
    <property type="term" value="P:negative regulation of forebrain neuron differentiation"/>
    <property type="evidence" value="ECO:0007669"/>
    <property type="project" value="Ensembl"/>
</dbReference>
<dbReference type="GO" id="GO:0050768">
    <property type="term" value="P:negative regulation of neurogenesis"/>
    <property type="evidence" value="ECO:0007669"/>
    <property type="project" value="Ensembl"/>
</dbReference>
<dbReference type="GO" id="GO:0010977">
    <property type="term" value="P:negative regulation of neuron projection development"/>
    <property type="evidence" value="ECO:0007669"/>
    <property type="project" value="Ensembl"/>
</dbReference>
<dbReference type="GO" id="GO:0002502">
    <property type="term" value="P:peptide antigen assembly with MHC class I protein complex"/>
    <property type="evidence" value="ECO:0007669"/>
    <property type="project" value="Ensembl"/>
</dbReference>
<dbReference type="GO" id="GO:2000774">
    <property type="term" value="P:positive regulation of cellular senescence"/>
    <property type="evidence" value="ECO:0007669"/>
    <property type="project" value="Ensembl"/>
</dbReference>
<dbReference type="GO" id="GO:0048260">
    <property type="term" value="P:positive regulation of receptor-mediated endocytosis"/>
    <property type="evidence" value="ECO:0007669"/>
    <property type="project" value="Ensembl"/>
</dbReference>
<dbReference type="GO" id="GO:0002726">
    <property type="term" value="P:positive regulation of T cell cytokine production"/>
    <property type="evidence" value="ECO:0007669"/>
    <property type="project" value="Ensembl"/>
</dbReference>
<dbReference type="GO" id="GO:0001916">
    <property type="term" value="P:positive regulation of T cell mediated cytotoxicity"/>
    <property type="evidence" value="ECO:0007669"/>
    <property type="project" value="Ensembl"/>
</dbReference>
<dbReference type="GO" id="GO:0051289">
    <property type="term" value="P:protein homotetramerization"/>
    <property type="evidence" value="ECO:0007669"/>
    <property type="project" value="Ensembl"/>
</dbReference>
<dbReference type="GO" id="GO:0042026">
    <property type="term" value="P:protein refolding"/>
    <property type="evidence" value="ECO:0007669"/>
    <property type="project" value="Ensembl"/>
</dbReference>
<dbReference type="GO" id="GO:0045646">
    <property type="term" value="P:regulation of erythrocyte differentiation"/>
    <property type="evidence" value="ECO:0007669"/>
    <property type="project" value="Ensembl"/>
</dbReference>
<dbReference type="GO" id="GO:0034756">
    <property type="term" value="P:regulation of iron ion transport"/>
    <property type="evidence" value="ECO:0007669"/>
    <property type="project" value="Ensembl"/>
</dbReference>
<dbReference type="GO" id="GO:0002237">
    <property type="term" value="P:response to molecule of bacterial origin"/>
    <property type="evidence" value="ECO:0007669"/>
    <property type="project" value="Ensembl"/>
</dbReference>
<dbReference type="GO" id="GO:0007608">
    <property type="term" value="P:sensory perception of smell"/>
    <property type="evidence" value="ECO:0007669"/>
    <property type="project" value="Ensembl"/>
</dbReference>
<dbReference type="GO" id="GO:0033077">
    <property type="term" value="P:T cell differentiation in thymus"/>
    <property type="evidence" value="ECO:0007669"/>
    <property type="project" value="Ensembl"/>
</dbReference>
<dbReference type="GO" id="GO:0001913">
    <property type="term" value="P:T cell mediated cytotoxicity"/>
    <property type="evidence" value="ECO:0007669"/>
    <property type="project" value="Ensembl"/>
</dbReference>
<dbReference type="CDD" id="cd05770">
    <property type="entry name" value="IgC1_beta2m"/>
    <property type="match status" value="1"/>
</dbReference>
<dbReference type="FunFam" id="2.60.40.10:FF:001005">
    <property type="entry name" value="Beta-2-microglobulin"/>
    <property type="match status" value="1"/>
</dbReference>
<dbReference type="Gene3D" id="2.60.40.10">
    <property type="entry name" value="Immunoglobulins"/>
    <property type="match status" value="1"/>
</dbReference>
<dbReference type="InterPro" id="IPR015707">
    <property type="entry name" value="B2Microglobulin"/>
</dbReference>
<dbReference type="InterPro" id="IPR007110">
    <property type="entry name" value="Ig-like_dom"/>
</dbReference>
<dbReference type="InterPro" id="IPR036179">
    <property type="entry name" value="Ig-like_dom_sf"/>
</dbReference>
<dbReference type="InterPro" id="IPR013783">
    <property type="entry name" value="Ig-like_fold"/>
</dbReference>
<dbReference type="InterPro" id="IPR003006">
    <property type="entry name" value="Ig/MHC_CS"/>
</dbReference>
<dbReference type="InterPro" id="IPR003597">
    <property type="entry name" value="Ig_C1-set"/>
</dbReference>
<dbReference type="InterPro" id="IPR050160">
    <property type="entry name" value="MHC/Immunoglobulin"/>
</dbReference>
<dbReference type="PANTHER" id="PTHR19944:SF62">
    <property type="entry name" value="BETA-2-MICROGLOBULIN"/>
    <property type="match status" value="1"/>
</dbReference>
<dbReference type="PANTHER" id="PTHR19944">
    <property type="entry name" value="MHC CLASS II-RELATED"/>
    <property type="match status" value="1"/>
</dbReference>
<dbReference type="Pfam" id="PF07654">
    <property type="entry name" value="C1-set"/>
    <property type="match status" value="1"/>
</dbReference>
<dbReference type="SMART" id="SM00407">
    <property type="entry name" value="IGc1"/>
    <property type="match status" value="1"/>
</dbReference>
<dbReference type="SUPFAM" id="SSF48726">
    <property type="entry name" value="Immunoglobulin"/>
    <property type="match status" value="1"/>
</dbReference>
<dbReference type="PROSITE" id="PS50835">
    <property type="entry name" value="IG_LIKE"/>
    <property type="match status" value="1"/>
</dbReference>
<dbReference type="PROSITE" id="PS00290">
    <property type="entry name" value="IG_MHC"/>
    <property type="match status" value="1"/>
</dbReference>
<reference key="1">
    <citation type="submission" date="1991-01" db="EMBL/GenBank/DDBJ databases">
        <title>cDNA sequence of CHO-KI hamster beta2-microglobulin.</title>
        <authorList>
            <person name="Gastinel L.N."/>
        </authorList>
    </citation>
    <scope>NUCLEOTIDE SEQUENCE [MRNA]</scope>
</reference>